<accession>Q9UGM1</accession>
<accession>Q14CY7</accession>
<accession>Q4W5A2</accession>
<accession>Q9NYV2</accession>
<sequence length="479" mass="54807">MNWSHSCISFCWIYFAASRLRAAETADGKYAQKLFNDLFEDYSNALRPVEDTDKVLNVTLQITLSQIKDMDERNQILTAYLWIRQIWHDAYLTWDRDQYDGLDSIRIPSDLVWRPDIVLYNKADDESSEPVNTNVVLRYDGLITWDAPAITKSSCVVDVTYFPFDNQQCNLTFGSWTYNGNQVDIFNALDSGDLSDFIEDVEWEVHGMPAVKNVISYGCCSEPYPDVTFTLLLKRRSSFYIVNLLIPCVLISFLAPLSFYLPAASGEKVSLGVTILLAMTVFQLMVAEIMPASENVPLIGKYYIATMALITASTALTIMVMNIHFCGAEARPVPHWARVVILKYMSRVLFVYDVGESCLSPHHSRERDHLTKVYSKLPESNLKAARNKDLSRKKDMNKRLKNDLGCQGKNPQEAESYCAQYKVLTRNIEYIAKCLKDHKATNSKGSEWKKVAKVIDRFFMWIFFIMVFVMTILIIARAD</sequence>
<organism>
    <name type="scientific">Homo sapiens</name>
    <name type="common">Human</name>
    <dbReference type="NCBI Taxonomy" id="9606"/>
    <lineage>
        <taxon>Eukaryota</taxon>
        <taxon>Metazoa</taxon>
        <taxon>Chordata</taxon>
        <taxon>Craniata</taxon>
        <taxon>Vertebrata</taxon>
        <taxon>Euteleostomi</taxon>
        <taxon>Mammalia</taxon>
        <taxon>Eutheria</taxon>
        <taxon>Euarchontoglires</taxon>
        <taxon>Primates</taxon>
        <taxon>Haplorrhini</taxon>
        <taxon>Catarrhini</taxon>
        <taxon>Hominidae</taxon>
        <taxon>Homo</taxon>
    </lineage>
</organism>
<evidence type="ECO:0000250" key="1">
    <source>
        <dbReference type="UniProtKB" id="P43144"/>
    </source>
</evidence>
<evidence type="ECO:0000255" key="2"/>
<evidence type="ECO:0000269" key="3">
    <source>
    </source>
</evidence>
<evidence type="ECO:0000269" key="4">
    <source>
    </source>
</evidence>
<evidence type="ECO:0000269" key="5">
    <source>
    </source>
</evidence>
<evidence type="ECO:0000269" key="6">
    <source>
    </source>
</evidence>
<evidence type="ECO:0000269" key="7">
    <source>
    </source>
</evidence>
<evidence type="ECO:0000269" key="8">
    <source>
    </source>
</evidence>
<evidence type="ECO:0000269" key="9">
    <source>
    </source>
</evidence>
<evidence type="ECO:0000269" key="10">
    <source>
    </source>
</evidence>
<evidence type="ECO:0000303" key="11">
    <source>
    </source>
</evidence>
<evidence type="ECO:0000305" key="12"/>
<evidence type="ECO:0000305" key="13">
    <source>
    </source>
</evidence>
<evidence type="ECO:0000312" key="14">
    <source>
        <dbReference type="HGNC" id="HGNC:14079"/>
    </source>
</evidence>
<evidence type="ECO:0007744" key="15">
    <source>
        <dbReference type="PDB" id="4D01"/>
    </source>
</evidence>
<evidence type="ECO:0007744" key="16">
    <source>
        <dbReference type="PDB" id="4UXU"/>
    </source>
</evidence>
<evidence type="ECO:0007744" key="17">
    <source>
        <dbReference type="PDB" id="4UY2"/>
    </source>
</evidence>
<evidence type="ECO:0007829" key="18">
    <source>
        <dbReference type="PDB" id="4UXU"/>
    </source>
</evidence>
<evidence type="ECO:0007829" key="19">
    <source>
        <dbReference type="PDB" id="4UY2"/>
    </source>
</evidence>
<feature type="signal peptide" evidence="2">
    <location>
        <begin position="1"/>
        <end position="22"/>
    </location>
</feature>
<feature type="chain" id="PRO_0000000371" description="Neuronal acetylcholine receptor subunit alpha-9">
    <location>
        <begin position="23"/>
        <end position="479"/>
    </location>
</feature>
<feature type="topological domain" description="Extracellular" evidence="2">
    <location>
        <begin position="23"/>
        <end position="238"/>
    </location>
</feature>
<feature type="transmembrane region" description="Helical" evidence="2">
    <location>
        <begin position="239"/>
        <end position="259"/>
    </location>
</feature>
<feature type="transmembrane region" description="Helical" evidence="2">
    <location>
        <begin position="269"/>
        <end position="289"/>
    </location>
</feature>
<feature type="transmembrane region" description="Helical" evidence="2">
    <location>
        <begin position="303"/>
        <end position="323"/>
    </location>
</feature>
<feature type="topological domain" description="Cytoplasmic" evidence="2">
    <location>
        <begin position="324"/>
        <end position="457"/>
    </location>
</feature>
<feature type="transmembrane region" description="Helical" evidence="2">
    <location>
        <begin position="458"/>
        <end position="478"/>
    </location>
</feature>
<feature type="binding site" evidence="10 16">
    <location>
        <position position="191"/>
    </location>
    <ligand>
        <name>Na(+)</name>
        <dbReference type="ChEBI" id="CHEBI:29101"/>
    </ligand>
</feature>
<feature type="binding site" evidence="10 16">
    <location>
        <position position="193"/>
    </location>
    <ligand>
        <name>Na(+)</name>
        <dbReference type="ChEBI" id="CHEBI:29101"/>
    </ligand>
</feature>
<feature type="site" description="Key residue important for potent inhibition of the CHRNA9:CHRNA10 receptor by the alpha-conotoxin RgIA (AC P0C1D0)" evidence="1">
    <location>
        <position position="146"/>
    </location>
</feature>
<feature type="glycosylation site" description="N-linked (GlcNAc...) asparagine" evidence="10 15 16 17">
    <location>
        <position position="57"/>
    </location>
</feature>
<feature type="glycosylation site" description="N-linked (GlcNAc...) asparagine" evidence="10 15 16 17">
    <location>
        <position position="170"/>
    </location>
</feature>
<feature type="disulfide bond" evidence="10 15 16 17">
    <location>
        <begin position="155"/>
        <end position="169"/>
    </location>
</feature>
<feature type="disulfide bond" evidence="10 15 16">
    <location>
        <begin position="219"/>
        <end position="220"/>
    </location>
</feature>
<feature type="sequence variant" id="VAR_031151" description="In dbSNP:rs10024518.">
    <original>R</original>
    <variation>Q</variation>
    <location>
        <position position="96"/>
    </location>
</feature>
<feature type="sequence variant" id="VAR_060996" description="In dbSNP:rs55633891.">
    <original>A</original>
    <variation>V</variation>
    <location>
        <position position="315"/>
    </location>
</feature>
<feature type="sequence variant" id="VAR_025425" description="In dbSNP:rs10009228." evidence="4 5 6">
    <original>N</original>
    <variation>S</variation>
    <location>
        <position position="442"/>
    </location>
</feature>
<feature type="mutagenesis site" description="The CHRNA9:CHRNA10 receptor is 250-fold more potently inhibited by the alpha-conotoxin RgIA." evidence="9">
    <original>I</original>
    <variation>T</variation>
    <location>
        <position position="86"/>
    </location>
</feature>
<feature type="mutagenesis site" description="Decreases response to acetylcholine." evidence="10">
    <original>T</original>
    <variation>K</variation>
    <location>
        <position position="172"/>
    </location>
</feature>
<feature type="mutagenesis site" description="Loss of response to acetylcholine." evidence="10">
    <original>T</original>
    <variation>A</variation>
    <location>
        <position position="228"/>
    </location>
</feature>
<feature type="helix" evidence="18">
    <location>
        <begin position="30"/>
        <end position="39"/>
    </location>
</feature>
<feature type="strand" evidence="19">
    <location>
        <begin position="49"/>
        <end position="51"/>
    </location>
</feature>
<feature type="strand" evidence="18">
    <location>
        <begin position="56"/>
        <end position="71"/>
    </location>
</feature>
<feature type="turn" evidence="18">
    <location>
        <begin position="72"/>
        <end position="75"/>
    </location>
</feature>
<feature type="strand" evidence="18">
    <location>
        <begin position="76"/>
        <end position="93"/>
    </location>
</feature>
<feature type="helix" evidence="18">
    <location>
        <begin position="96"/>
        <end position="98"/>
    </location>
</feature>
<feature type="turn" evidence="18">
    <location>
        <begin position="99"/>
        <end position="101"/>
    </location>
</feature>
<feature type="strand" evidence="18">
    <location>
        <begin position="104"/>
        <end position="108"/>
    </location>
</feature>
<feature type="helix" evidence="18">
    <location>
        <begin position="109"/>
        <end position="111"/>
    </location>
</feature>
<feature type="strand" evidence="18">
    <location>
        <begin position="117"/>
        <end position="119"/>
    </location>
</feature>
<feature type="strand" evidence="18">
    <location>
        <begin position="134"/>
        <end position="138"/>
    </location>
</feature>
<feature type="strand" evidence="18">
    <location>
        <begin position="140"/>
        <end position="154"/>
    </location>
</feature>
<feature type="strand" evidence="18">
    <location>
        <begin position="156"/>
        <end position="158"/>
    </location>
</feature>
<feature type="strand" evidence="18">
    <location>
        <begin position="164"/>
        <end position="177"/>
    </location>
</feature>
<feature type="turn" evidence="18">
    <location>
        <begin position="180"/>
        <end position="182"/>
    </location>
</feature>
<feature type="strand" evidence="18">
    <location>
        <begin position="183"/>
        <end position="191"/>
    </location>
</feature>
<feature type="strand" evidence="18">
    <location>
        <begin position="201"/>
        <end position="207"/>
    </location>
</feature>
<feature type="strand" evidence="18">
    <location>
        <begin position="209"/>
        <end position="217"/>
    </location>
</feature>
<feature type="turn" evidence="18">
    <location>
        <begin position="218"/>
        <end position="220"/>
    </location>
</feature>
<feature type="strand" evidence="18">
    <location>
        <begin position="224"/>
        <end position="235"/>
    </location>
</feature>
<name>ACHA9_HUMAN</name>
<proteinExistence type="evidence at protein level"/>
<comment type="function">
    <text evidence="1 3 4 8 10 11">Component of neuronal acetylcholine receptors (nAChRs) that function as pentameric, ligand-gated cation channels with high calcium permeability among other activities. nAChRs are excitatory neurotrasnmitter receptors formed by a collection of nAChR subunits known to mediate synaptic transmission in the nervous system and the neuromuscular junction. Each nAchR subunit confers differential attributes to channel properties, including activation, deactivation and desensitization kinetics, pH sensitivity, cation permeability, and binding to allosteric modulators (PubMed:11752216, PubMed:18723036, PubMed:25282151). Forms either homopentamers or heteropentamers with CHRNA10. Expressed in the inner ear, in sympathetic neurons and in other non-neuronal cells, such as skin keratinocytes and lymphocytes (PubMed:11752216, PubMed:18723036). nAChR formed by CHRNA9:CHRNA10 mediate central nervous system control of auditory and vestibular sensory processing. The channel is permeable to a range of divalent cations including calcium, the influx of which may activate a potassium current which hyperpolarizes the cell membrane (PubMed:11752216, PubMed:25282151). In the ear, mediates synaptic transmission between efferent olivocochlear fibers and hair cells of the cochlea, this may lead to a reduction in basilar membrane motion, altering the activity of auditory nerve fibers and reducing the range of dynamic hearing. This may protect against acoustic trauma (By similarity). May also regulate keratinocyte adhesion (PubMed:11021840, PubMed:11752216, PubMed:25282151).</text>
</comment>
<comment type="catalytic activity">
    <reaction evidence="4">
        <text>Ca(2+)(in) = Ca(2+)(out)</text>
        <dbReference type="Rhea" id="RHEA:29671"/>
        <dbReference type="ChEBI" id="CHEBI:29108"/>
    </reaction>
</comment>
<comment type="catalytic activity">
    <reaction evidence="1">
        <text>K(+)(in) = K(+)(out)</text>
        <dbReference type="Rhea" id="RHEA:29463"/>
        <dbReference type="ChEBI" id="CHEBI:29103"/>
    </reaction>
</comment>
<comment type="catalytic activity">
    <reaction evidence="1">
        <text>Na(+)(in) = Na(+)(out)</text>
        <dbReference type="Rhea" id="RHEA:34963"/>
        <dbReference type="ChEBI" id="CHEBI:29101"/>
    </reaction>
</comment>
<comment type="catalytic activity">
    <reaction evidence="1">
        <text>Mg(2+)(in) = Mg(2+)(out)</text>
        <dbReference type="Rhea" id="RHEA:29827"/>
        <dbReference type="ChEBI" id="CHEBI:18420"/>
    </reaction>
</comment>
<comment type="activity regulation">
    <text evidence="9">Activated by a myriad of ligands such as acetylcholine (PubMed:22774872). AChR activity is inhibited by the antagonist alpha-conotoxins RgIA and GeXXA, small disulfide-constrained peptides from cone snails (PubMed:22774872).</text>
</comment>
<comment type="subunit">
    <text evidence="1 4">Forms homo- or heteropentameric channels in conjunction with CHRNA10 (PubMed:11752216). The native outer hair cell receptor is composed of CHRNA9:CHRNA10 heterooligomers. Found in the stoichiometric form (CHRNA9)2:(CHRNA10)3 (By similarity).</text>
</comment>
<comment type="interaction">
    <interactant intactId="EBI-9008641">
        <id>Q9UGM1</id>
    </interactant>
    <interactant intactId="EBI-16123259">
        <id>P60616</id>
    </interactant>
    <organismsDiffer>true</organismsDiffer>
    <experiments>2</experiments>
</comment>
<comment type="subcellular location">
    <subcellularLocation>
        <location evidence="12">Synaptic cell membrane</location>
        <topology evidence="2">Multi-pass membrane protein</topology>
    </subcellularLocation>
    <subcellularLocation>
        <location evidence="10">Cell membrane</location>
        <topology evidence="2">Multi-pass membrane protein</topology>
    </subcellularLocation>
</comment>
<comment type="tissue specificity">
    <text evidence="3 4 7">Expressed in cochlea, keratinocytes, pituitary gland, B-cells and T-cells.</text>
</comment>
<comment type="PTM">
    <text evidence="10">N-glycosylated.</text>
</comment>
<comment type="miscellaneous">
    <text evidence="13">The heterooligomeric receptor composed of CHRNA9 and CHRNA10 has an atypical pharmacological profile, binding several non-nicotinic ligands including strychnine (a glycine receptor antagonist) and atropine (a muscarinic acetylcholine receptor antagonist).</text>
</comment>
<comment type="similarity">
    <text evidence="12">Belongs to the ligand-gated ion channel (TC 1.A.9) family. Acetylcholine receptor (TC 1.A.9.1) subfamily. Alpha-9/CHRNA9 sub-subfamily.</text>
</comment>
<protein>
    <recommendedName>
        <fullName>Neuronal acetylcholine receptor subunit alpha-9</fullName>
    </recommendedName>
    <alternativeName>
        <fullName>Nicotinic acetylcholine receptor subunit alpha-9</fullName>
        <shortName>NACHR alpha-9</shortName>
    </alternativeName>
</protein>
<dbReference type="EMBL" id="AJ243342">
    <property type="protein sequence ID" value="CAB65091.1"/>
    <property type="molecule type" value="mRNA"/>
</dbReference>
<dbReference type="EMBL" id="AY123244">
    <property type="protein sequence ID" value="AAM74523.1"/>
    <property type="molecule type" value="Genomic_DNA"/>
</dbReference>
<dbReference type="EMBL" id="AC118275">
    <property type="protein sequence ID" value="AAY40986.1"/>
    <property type="molecule type" value="Genomic_DNA"/>
</dbReference>
<dbReference type="EMBL" id="BC113549">
    <property type="protein sequence ID" value="AAI13550.1"/>
    <property type="molecule type" value="mRNA"/>
</dbReference>
<dbReference type="EMBL" id="BC113575">
    <property type="protein sequence ID" value="AAI13576.1"/>
    <property type="molecule type" value="mRNA"/>
</dbReference>
<dbReference type="EMBL" id="AF227732">
    <property type="protein sequence ID" value="AAF61920.1"/>
    <property type="molecule type" value="mRNA"/>
</dbReference>
<dbReference type="CCDS" id="CCDS3459.1"/>
<dbReference type="RefSeq" id="NP_060051.2">
    <property type="nucleotide sequence ID" value="NM_017581.4"/>
</dbReference>
<dbReference type="PDB" id="4D01">
    <property type="method" value="X-ray"/>
    <property type="resolution" value="1.80 A"/>
    <property type="chains" value="A=26-237"/>
</dbReference>
<dbReference type="PDB" id="4UXU">
    <property type="method" value="X-ray"/>
    <property type="resolution" value="1.71 A"/>
    <property type="chains" value="A/B=26-237"/>
</dbReference>
<dbReference type="PDB" id="4UY2">
    <property type="method" value="X-ray"/>
    <property type="resolution" value="2.70 A"/>
    <property type="chains" value="A/B=26-237"/>
</dbReference>
<dbReference type="PDB" id="6HY7">
    <property type="method" value="X-ray"/>
    <property type="resolution" value="2.26 A"/>
    <property type="chains" value="A=26-237"/>
</dbReference>
<dbReference type="PDBsum" id="4D01"/>
<dbReference type="PDBsum" id="4UXU"/>
<dbReference type="PDBsum" id="4UY2"/>
<dbReference type="PDBsum" id="6HY7"/>
<dbReference type="SMR" id="Q9UGM1"/>
<dbReference type="BioGRID" id="120731">
    <property type="interactions" value="80"/>
</dbReference>
<dbReference type="ComplexPortal" id="CPX-2171">
    <property type="entry name" value="Neuronal nicotinic acetylcholine receptor complex, alpha9-alpha10"/>
</dbReference>
<dbReference type="ComplexPortal" id="CPX-226">
    <property type="entry name" value="Neuronal nicotinic acetylcholine receptor complex, alpha9"/>
</dbReference>
<dbReference type="CORUM" id="Q9UGM1"/>
<dbReference type="DIP" id="DIP-61053N"/>
<dbReference type="FunCoup" id="Q9UGM1">
    <property type="interactions" value="550"/>
</dbReference>
<dbReference type="IntAct" id="Q9UGM1">
    <property type="interactions" value="50"/>
</dbReference>
<dbReference type="STRING" id="9606.ENSP00000312663"/>
<dbReference type="BindingDB" id="Q9UGM1"/>
<dbReference type="ChEMBL" id="CHEMBL2184"/>
<dbReference type="DrugBank" id="DB05069">
    <property type="generic name" value="ATG003"/>
</dbReference>
<dbReference type="DrugBank" id="DB00237">
    <property type="generic name" value="Butabarbital"/>
</dbReference>
<dbReference type="DrugBank" id="DB00565">
    <property type="generic name" value="Cisatracurium"/>
</dbReference>
<dbReference type="DrugBank" id="DB00898">
    <property type="generic name" value="Ethanol"/>
</dbReference>
<dbReference type="DrugBank" id="DB05137">
    <property type="generic name" value="Lobeline"/>
</dbReference>
<dbReference type="DrugBank" id="DB00184">
    <property type="generic name" value="Nicotine"/>
</dbReference>
<dbReference type="DrugBank" id="DB05740">
    <property type="generic name" value="RPI-78M"/>
</dbReference>
<dbReference type="DrugBank" id="DB00202">
    <property type="generic name" value="Succinylcholine"/>
</dbReference>
<dbReference type="DrugBank" id="DB08837">
    <property type="generic name" value="Tetraethylammonium"/>
</dbReference>
<dbReference type="GuidetoPHARMACOLOGY" id="469"/>
<dbReference type="TCDB" id="1.A.9.1.22">
    <property type="family name" value="the neurotransmitter receptor, cys loop, ligand-gated ion channel (lic) family"/>
</dbReference>
<dbReference type="GlyCosmos" id="Q9UGM1">
    <property type="glycosylation" value="2 sites, No reported glycans"/>
</dbReference>
<dbReference type="GlyGen" id="Q9UGM1">
    <property type="glycosylation" value="2 sites"/>
</dbReference>
<dbReference type="iPTMnet" id="Q9UGM1"/>
<dbReference type="PhosphoSitePlus" id="Q9UGM1"/>
<dbReference type="BioMuta" id="CHRNA9"/>
<dbReference type="DMDM" id="308153406"/>
<dbReference type="jPOST" id="Q9UGM1"/>
<dbReference type="MassIVE" id="Q9UGM1"/>
<dbReference type="PaxDb" id="9606-ENSP00000312663"/>
<dbReference type="PeptideAtlas" id="Q9UGM1"/>
<dbReference type="ProteomicsDB" id="84234"/>
<dbReference type="Antibodypedia" id="11757">
    <property type="antibodies" value="109 antibodies from 25 providers"/>
</dbReference>
<dbReference type="DNASU" id="55584"/>
<dbReference type="Ensembl" id="ENST00000310169.3">
    <property type="protein sequence ID" value="ENSP00000312663.2"/>
    <property type="gene ID" value="ENSG00000174343.6"/>
</dbReference>
<dbReference type="GeneID" id="55584"/>
<dbReference type="KEGG" id="hsa:55584"/>
<dbReference type="MANE-Select" id="ENST00000310169.3">
    <property type="protein sequence ID" value="ENSP00000312663.2"/>
    <property type="RefSeq nucleotide sequence ID" value="NM_017581.4"/>
    <property type="RefSeq protein sequence ID" value="NP_060051.2"/>
</dbReference>
<dbReference type="UCSC" id="uc003gva.2">
    <property type="organism name" value="human"/>
</dbReference>
<dbReference type="AGR" id="HGNC:14079"/>
<dbReference type="CTD" id="55584"/>
<dbReference type="DisGeNET" id="55584"/>
<dbReference type="GeneCards" id="CHRNA9"/>
<dbReference type="HGNC" id="HGNC:14079">
    <property type="gene designation" value="CHRNA9"/>
</dbReference>
<dbReference type="HPA" id="ENSG00000174343">
    <property type="expression patterns" value="Not detected"/>
</dbReference>
<dbReference type="MIM" id="605116">
    <property type="type" value="gene"/>
</dbReference>
<dbReference type="neXtProt" id="NX_Q9UGM1"/>
<dbReference type="OpenTargets" id="ENSG00000174343"/>
<dbReference type="PharmGKB" id="PA26493"/>
<dbReference type="VEuPathDB" id="HostDB:ENSG00000174343"/>
<dbReference type="eggNOG" id="KOG3645">
    <property type="taxonomic scope" value="Eukaryota"/>
</dbReference>
<dbReference type="GeneTree" id="ENSGT00940000156077"/>
<dbReference type="HOGENOM" id="CLU_018074_0_0_1"/>
<dbReference type="InParanoid" id="Q9UGM1"/>
<dbReference type="OMA" id="CVYDVGE"/>
<dbReference type="OrthoDB" id="5975154at2759"/>
<dbReference type="PAN-GO" id="Q9UGM1">
    <property type="GO annotations" value="9 GO annotations based on evolutionary models"/>
</dbReference>
<dbReference type="PhylomeDB" id="Q9UGM1"/>
<dbReference type="TreeFam" id="TF315605"/>
<dbReference type="PathwayCommons" id="Q9UGM1"/>
<dbReference type="Reactome" id="R-HSA-629594">
    <property type="pathway name" value="Highly calcium permeable postsynaptic nicotinic acetylcholine receptors"/>
</dbReference>
<dbReference type="Reactome" id="R-HSA-9667769">
    <property type="pathway name" value="Acetylcholine inhibits contraction of outer hair cells"/>
</dbReference>
<dbReference type="SignaLink" id="Q9UGM1"/>
<dbReference type="BioGRID-ORCS" id="55584">
    <property type="hits" value="7 hits in 1145 CRISPR screens"/>
</dbReference>
<dbReference type="ChiTaRS" id="CHRNA9">
    <property type="organism name" value="human"/>
</dbReference>
<dbReference type="EvolutionaryTrace" id="Q9UGM1"/>
<dbReference type="GeneWiki" id="CHRNA9"/>
<dbReference type="GenomeRNAi" id="55584"/>
<dbReference type="Pharos" id="Q9UGM1">
    <property type="development level" value="Tchem"/>
</dbReference>
<dbReference type="PRO" id="PR:Q9UGM1"/>
<dbReference type="Proteomes" id="UP000005640">
    <property type="component" value="Chromosome 4"/>
</dbReference>
<dbReference type="RNAct" id="Q9UGM1">
    <property type="molecule type" value="protein"/>
</dbReference>
<dbReference type="Bgee" id="ENSG00000174343">
    <property type="expression patterns" value="Expressed in male germ line stem cell (sensu Vertebrata) in testis and 63 other cell types or tissues"/>
</dbReference>
<dbReference type="GO" id="GO:0005892">
    <property type="term" value="C:acetylcholine-gated channel complex"/>
    <property type="evidence" value="ECO:0000314"/>
    <property type="project" value="UniProtKB"/>
</dbReference>
<dbReference type="GO" id="GO:0098981">
    <property type="term" value="C:cholinergic synapse"/>
    <property type="evidence" value="ECO:0007669"/>
    <property type="project" value="Ensembl"/>
</dbReference>
<dbReference type="GO" id="GO:0043005">
    <property type="term" value="C:neuron projection"/>
    <property type="evidence" value="ECO:0000318"/>
    <property type="project" value="GO_Central"/>
</dbReference>
<dbReference type="GO" id="GO:0005886">
    <property type="term" value="C:plasma membrane"/>
    <property type="evidence" value="ECO:0000314"/>
    <property type="project" value="UniProtKB"/>
</dbReference>
<dbReference type="GO" id="GO:0099634">
    <property type="term" value="C:postsynaptic specialization membrane"/>
    <property type="evidence" value="ECO:0007669"/>
    <property type="project" value="Ensembl"/>
</dbReference>
<dbReference type="GO" id="GO:0045202">
    <property type="term" value="C:synapse"/>
    <property type="evidence" value="ECO:0000318"/>
    <property type="project" value="GO_Central"/>
</dbReference>
<dbReference type="GO" id="GO:1902495">
    <property type="term" value="C:transmembrane transporter complex"/>
    <property type="evidence" value="ECO:0000318"/>
    <property type="project" value="GO_Central"/>
</dbReference>
<dbReference type="GO" id="GO:0022848">
    <property type="term" value="F:acetylcholine-gated monoatomic cation-selective channel activity"/>
    <property type="evidence" value="ECO:0000314"/>
    <property type="project" value="UniProtKB"/>
</dbReference>
<dbReference type="GO" id="GO:0005262">
    <property type="term" value="F:calcium channel activity"/>
    <property type="evidence" value="ECO:0007669"/>
    <property type="project" value="UniProtKB-KW"/>
</dbReference>
<dbReference type="GO" id="GO:0005231">
    <property type="term" value="F:excitatory extracellular ligand-gated monoatomic ion channel activity"/>
    <property type="evidence" value="ECO:0000318"/>
    <property type="project" value="GO_Central"/>
</dbReference>
<dbReference type="GO" id="GO:0022850">
    <property type="term" value="F:serotonin-gated monoatomic cation channel activity"/>
    <property type="evidence" value="ECO:0000318"/>
    <property type="project" value="GO_Central"/>
</dbReference>
<dbReference type="GO" id="GO:1904315">
    <property type="term" value="F:transmitter-gated monoatomic ion channel activity involved in regulation of postsynaptic membrane potential"/>
    <property type="evidence" value="ECO:0000318"/>
    <property type="project" value="GO_Central"/>
</dbReference>
<dbReference type="GO" id="GO:0007268">
    <property type="term" value="P:chemical synaptic transmission"/>
    <property type="evidence" value="ECO:0000318"/>
    <property type="project" value="GO_Central"/>
</dbReference>
<dbReference type="GO" id="GO:0050910">
    <property type="term" value="P:detection of mechanical stimulus involved in sensory perception of sound"/>
    <property type="evidence" value="ECO:0007669"/>
    <property type="project" value="Ensembl"/>
</dbReference>
<dbReference type="GO" id="GO:0042472">
    <property type="term" value="P:inner ear morphogenesis"/>
    <property type="evidence" value="ECO:0007669"/>
    <property type="project" value="Ensembl"/>
</dbReference>
<dbReference type="GO" id="GO:0051899">
    <property type="term" value="P:membrane depolarization"/>
    <property type="evidence" value="ECO:0007669"/>
    <property type="project" value="Ensembl"/>
</dbReference>
<dbReference type="GO" id="GO:0034220">
    <property type="term" value="P:monoatomic ion transmembrane transport"/>
    <property type="evidence" value="ECO:0000318"/>
    <property type="project" value="GO_Central"/>
</dbReference>
<dbReference type="GO" id="GO:0070373">
    <property type="term" value="P:negative regulation of ERK1 and ERK2 cascade"/>
    <property type="evidence" value="ECO:0007669"/>
    <property type="project" value="Ensembl"/>
</dbReference>
<dbReference type="GO" id="GO:0007204">
    <property type="term" value="P:positive regulation of cytosolic calcium ion concentration"/>
    <property type="evidence" value="ECO:0000316"/>
    <property type="project" value="MGI"/>
</dbReference>
<dbReference type="GO" id="GO:0042391">
    <property type="term" value="P:regulation of membrane potential"/>
    <property type="evidence" value="ECO:0000318"/>
    <property type="project" value="GO_Central"/>
</dbReference>
<dbReference type="GO" id="GO:0010996">
    <property type="term" value="P:response to auditory stimulus"/>
    <property type="evidence" value="ECO:0007669"/>
    <property type="project" value="Ensembl"/>
</dbReference>
<dbReference type="CDD" id="cd19022">
    <property type="entry name" value="LGIC_ECD_nAChR_A9"/>
    <property type="match status" value="1"/>
</dbReference>
<dbReference type="CDD" id="cd19051">
    <property type="entry name" value="LGIC_TM_cation"/>
    <property type="match status" value="1"/>
</dbReference>
<dbReference type="FunFam" id="1.20.58.390:FF:000009">
    <property type="entry name" value="Cholinergic receptor nicotinic alpha 9 subunit"/>
    <property type="match status" value="1"/>
</dbReference>
<dbReference type="FunFam" id="1.20.58.390:FF:000044">
    <property type="entry name" value="neuronal acetylcholine receptor subunit alpha-9"/>
    <property type="match status" value="1"/>
</dbReference>
<dbReference type="FunFam" id="2.70.170.10:FF:000010">
    <property type="entry name" value="neuronal acetylcholine receptor subunit alpha-9"/>
    <property type="match status" value="1"/>
</dbReference>
<dbReference type="Gene3D" id="2.70.170.10">
    <property type="entry name" value="Neurotransmitter-gated ion-channel ligand-binding domain"/>
    <property type="match status" value="1"/>
</dbReference>
<dbReference type="Gene3D" id="1.20.58.390">
    <property type="entry name" value="Neurotransmitter-gated ion-channel transmembrane domain"/>
    <property type="match status" value="2"/>
</dbReference>
<dbReference type="InterPro" id="IPR006202">
    <property type="entry name" value="Neur_chan_lig-bd"/>
</dbReference>
<dbReference type="InterPro" id="IPR036734">
    <property type="entry name" value="Neur_chan_lig-bd_sf"/>
</dbReference>
<dbReference type="InterPro" id="IPR006201">
    <property type="entry name" value="Neur_channel"/>
</dbReference>
<dbReference type="InterPro" id="IPR036719">
    <property type="entry name" value="Neuro-gated_channel_TM_sf"/>
</dbReference>
<dbReference type="InterPro" id="IPR038050">
    <property type="entry name" value="Neuro_actylchol_rec"/>
</dbReference>
<dbReference type="InterPro" id="IPR006029">
    <property type="entry name" value="Neurotrans-gated_channel_TM"/>
</dbReference>
<dbReference type="InterPro" id="IPR018000">
    <property type="entry name" value="Neurotransmitter_ion_chnl_CS"/>
</dbReference>
<dbReference type="InterPro" id="IPR002394">
    <property type="entry name" value="Nicotinic_acetylcholine_rcpt"/>
</dbReference>
<dbReference type="NCBIfam" id="TIGR00860">
    <property type="entry name" value="LIC"/>
    <property type="match status" value="1"/>
</dbReference>
<dbReference type="PANTHER" id="PTHR18945">
    <property type="entry name" value="NEUROTRANSMITTER GATED ION CHANNEL"/>
    <property type="match status" value="1"/>
</dbReference>
<dbReference type="Pfam" id="PF02931">
    <property type="entry name" value="Neur_chan_LBD"/>
    <property type="match status" value="1"/>
</dbReference>
<dbReference type="Pfam" id="PF02932">
    <property type="entry name" value="Neur_chan_memb"/>
    <property type="match status" value="1"/>
</dbReference>
<dbReference type="PRINTS" id="PR00254">
    <property type="entry name" value="NICOTINICR"/>
</dbReference>
<dbReference type="PRINTS" id="PR00252">
    <property type="entry name" value="NRIONCHANNEL"/>
</dbReference>
<dbReference type="SUPFAM" id="SSF90112">
    <property type="entry name" value="Neurotransmitter-gated ion-channel transmembrane pore"/>
    <property type="match status" value="1"/>
</dbReference>
<dbReference type="SUPFAM" id="SSF63712">
    <property type="entry name" value="Nicotinic receptor ligand binding domain-like"/>
    <property type="match status" value="1"/>
</dbReference>
<dbReference type="PROSITE" id="PS00236">
    <property type="entry name" value="NEUROTR_ION_CHANNEL"/>
    <property type="match status" value="1"/>
</dbReference>
<keyword id="KW-0002">3D-structure</keyword>
<keyword id="KW-0106">Calcium</keyword>
<keyword id="KW-0107">Calcium channel</keyword>
<keyword id="KW-0109">Calcium transport</keyword>
<keyword id="KW-1003">Cell membrane</keyword>
<keyword id="KW-1015">Disulfide bond</keyword>
<keyword id="KW-0325">Glycoprotein</keyword>
<keyword id="KW-0407">Ion channel</keyword>
<keyword id="KW-0406">Ion transport</keyword>
<keyword id="KW-1071">Ligand-gated ion channel</keyword>
<keyword id="KW-0472">Membrane</keyword>
<keyword id="KW-1267">Proteomics identification</keyword>
<keyword id="KW-0675">Receptor</keyword>
<keyword id="KW-1185">Reference proteome</keyword>
<keyword id="KW-0732">Signal</keyword>
<keyword id="KW-0770">Synapse</keyword>
<keyword id="KW-0812">Transmembrane</keyword>
<keyword id="KW-1133">Transmembrane helix</keyword>
<keyword id="KW-0813">Transport</keyword>
<reference key="1">
    <citation type="journal article" date="2002" name="Mol. Pharmacol.">
        <title>A novel human nicotinic receptor subunit, alpha10, that confers functionality to the alpha9-subunit.</title>
        <authorList>
            <person name="Sgard F."/>
            <person name="Charpantier E."/>
            <person name="Bertrand S."/>
            <person name="Walker N."/>
            <person name="Caput D."/>
            <person name="Graham D."/>
            <person name="Bertrand D."/>
            <person name="Besnard F."/>
        </authorList>
    </citation>
    <scope>NUCLEOTIDE SEQUENCE [MRNA]</scope>
    <scope>FUNCTION</scope>
    <scope>INTERACTION WITH CHRNA10</scope>
    <scope>SUBUNIT</scope>
    <scope>SUBCELLULAR LOCATION</scope>
    <scope>TISSUE SPECIFICITY</scope>
    <scope>VARIANT SER-442</scope>
    <source>
        <tissue>Embryo</tissue>
    </source>
</reference>
<reference key="2">
    <citation type="journal article" date="2002" name="Cytogenet. Genome Res.">
        <title>Chromosome location and characterization of the human nicotinic acetylcholine receptor subunit alpha (alpha) 9 (CHRNA9) gene.</title>
        <authorList>
            <person name="Lustig L.R."/>
            <person name="Peng H."/>
        </authorList>
    </citation>
    <scope>NUCLEOTIDE SEQUENCE [GENOMIC DNA]</scope>
    <scope>VARIANT SER-442</scope>
</reference>
<reference key="3">
    <citation type="journal article" date="2005" name="Nature">
        <title>Generation and annotation of the DNA sequences of human chromosomes 2 and 4.</title>
        <authorList>
            <person name="Hillier L.W."/>
            <person name="Graves T.A."/>
            <person name="Fulton R.S."/>
            <person name="Fulton L.A."/>
            <person name="Pepin K.H."/>
            <person name="Minx P."/>
            <person name="Wagner-McPherson C."/>
            <person name="Layman D."/>
            <person name="Wylie K."/>
            <person name="Sekhon M."/>
            <person name="Becker M.C."/>
            <person name="Fewell G.A."/>
            <person name="Delehaunty K.D."/>
            <person name="Miner T.L."/>
            <person name="Nash W.E."/>
            <person name="Kremitzki C."/>
            <person name="Oddy L."/>
            <person name="Du H."/>
            <person name="Sun H."/>
            <person name="Bradshaw-Cordum H."/>
            <person name="Ali J."/>
            <person name="Carter J."/>
            <person name="Cordes M."/>
            <person name="Harris A."/>
            <person name="Isak A."/>
            <person name="van Brunt A."/>
            <person name="Nguyen C."/>
            <person name="Du F."/>
            <person name="Courtney L."/>
            <person name="Kalicki J."/>
            <person name="Ozersky P."/>
            <person name="Abbott S."/>
            <person name="Armstrong J."/>
            <person name="Belter E.A."/>
            <person name="Caruso L."/>
            <person name="Cedroni M."/>
            <person name="Cotton M."/>
            <person name="Davidson T."/>
            <person name="Desai A."/>
            <person name="Elliott G."/>
            <person name="Erb T."/>
            <person name="Fronick C."/>
            <person name="Gaige T."/>
            <person name="Haakenson W."/>
            <person name="Haglund K."/>
            <person name="Holmes A."/>
            <person name="Harkins R."/>
            <person name="Kim K."/>
            <person name="Kruchowski S.S."/>
            <person name="Strong C.M."/>
            <person name="Grewal N."/>
            <person name="Goyea E."/>
            <person name="Hou S."/>
            <person name="Levy A."/>
            <person name="Martinka S."/>
            <person name="Mead K."/>
            <person name="McLellan M.D."/>
            <person name="Meyer R."/>
            <person name="Randall-Maher J."/>
            <person name="Tomlinson C."/>
            <person name="Dauphin-Kohlberg S."/>
            <person name="Kozlowicz-Reilly A."/>
            <person name="Shah N."/>
            <person name="Swearengen-Shahid S."/>
            <person name="Snider J."/>
            <person name="Strong J.T."/>
            <person name="Thompson J."/>
            <person name="Yoakum M."/>
            <person name="Leonard S."/>
            <person name="Pearman C."/>
            <person name="Trani L."/>
            <person name="Radionenko M."/>
            <person name="Waligorski J.E."/>
            <person name="Wang C."/>
            <person name="Rock S.M."/>
            <person name="Tin-Wollam A.-M."/>
            <person name="Maupin R."/>
            <person name="Latreille P."/>
            <person name="Wendl M.C."/>
            <person name="Yang S.-P."/>
            <person name="Pohl C."/>
            <person name="Wallis J.W."/>
            <person name="Spieth J."/>
            <person name="Bieri T.A."/>
            <person name="Berkowicz N."/>
            <person name="Nelson J.O."/>
            <person name="Osborne J."/>
            <person name="Ding L."/>
            <person name="Meyer R."/>
            <person name="Sabo A."/>
            <person name="Shotland Y."/>
            <person name="Sinha P."/>
            <person name="Wohldmann P.E."/>
            <person name="Cook L.L."/>
            <person name="Hickenbotham M.T."/>
            <person name="Eldred J."/>
            <person name="Williams D."/>
            <person name="Jones T.A."/>
            <person name="She X."/>
            <person name="Ciccarelli F.D."/>
            <person name="Izaurralde E."/>
            <person name="Taylor J."/>
            <person name="Schmutz J."/>
            <person name="Myers R.M."/>
            <person name="Cox D.R."/>
            <person name="Huang X."/>
            <person name="McPherson J.D."/>
            <person name="Mardis E.R."/>
            <person name="Clifton S.W."/>
            <person name="Warren W.C."/>
            <person name="Chinwalla A.T."/>
            <person name="Eddy S.R."/>
            <person name="Marra M.A."/>
            <person name="Ovcharenko I."/>
            <person name="Furey T.S."/>
            <person name="Miller W."/>
            <person name="Eichler E.E."/>
            <person name="Bork P."/>
            <person name="Suyama M."/>
            <person name="Torrents D."/>
            <person name="Waterston R.H."/>
            <person name="Wilson R.K."/>
        </authorList>
    </citation>
    <scope>NUCLEOTIDE SEQUENCE [LARGE SCALE GENOMIC DNA]</scope>
</reference>
<reference key="4">
    <citation type="journal article" date="2004" name="Genome Res.">
        <title>The status, quality, and expansion of the NIH full-length cDNA project: the Mammalian Gene Collection (MGC).</title>
        <authorList>
            <consortium name="The MGC Project Team"/>
        </authorList>
    </citation>
    <scope>NUCLEOTIDE SEQUENCE [LARGE SCALE MRNA]</scope>
    <scope>VARIANT SER-442</scope>
</reference>
<reference key="5">
    <citation type="journal article" date="2000" name="Am. J. Pathol.">
        <title>Novel human alpha9 acetylcholine receptor regulating keratinocyte adhesion is targeted by Pemphigus vulgaris autoimmunity.</title>
        <authorList>
            <person name="Nguyen V.T."/>
            <person name="Ndoye A."/>
            <person name="Grando S.A."/>
        </authorList>
    </citation>
    <scope>NUCLEOTIDE SEQUENCE [MRNA] OF 7-476</scope>
    <scope>FUNCTION</scope>
    <scope>TISSUE SPECIFICITY</scope>
</reference>
<reference key="6">
    <citation type="journal article" date="2004" name="Life Sci.">
        <title>Characterization of the human nicotinic acetylcholine receptor subunit alpha (alpha) 9 (CHRNA9) and alpha (alpha) 10 (CHRNA10) in lymphocytes.</title>
        <authorList>
            <person name="Peng H."/>
            <person name="Ferris R.L."/>
            <person name="Matthews T."/>
            <person name="Hiel H."/>
            <person name="Lopez-Albaitero A."/>
            <person name="Lustig L.R."/>
        </authorList>
    </citation>
    <scope>TISSUE SPECIFICITY</scope>
    <scope>FUNCTION</scope>
</reference>
<reference key="7">
    <citation type="journal article" date="2009" name="Neuropharmacology">
        <title>Diversity of vertebrate nicotinic acetylcholine receptors.</title>
        <authorList>
            <person name="Millar N.S."/>
            <person name="Gotti C."/>
        </authorList>
    </citation>
    <scope>REVIEW ON NACHRS DIVERSITY</scope>
</reference>
<reference key="8">
    <citation type="journal article" date="2012" name="J. Neurochem.">
        <title>Molecular basis for the differential sensitivity of rat and human alpha9alpha10 nAChRs to alpha-conotoxin RgIA.</title>
        <authorList>
            <person name="Azam L."/>
            <person name="McIntosh J.M."/>
        </authorList>
    </citation>
    <scope>MUTAGENESIS OF ILE-86</scope>
    <scope>ACTIVITY REGULATION</scope>
</reference>
<reference evidence="15 16 17" key="9">
    <citation type="journal article" date="2014" name="Nat. Struct. Mol. Biol.">
        <title>Crystal structures of free and antagonist-bound states of human alpha9 nicotinic receptor extracellular domain.</title>
        <authorList>
            <person name="Zouridakis M."/>
            <person name="Giastas P."/>
            <person name="Zarkadas E."/>
            <person name="Chroni-Tzartou D."/>
            <person name="Bregestovski P."/>
            <person name="Tzartos S.J."/>
        </authorList>
    </citation>
    <scope>X-RAY CRYSTALLOGRAPHY (1.71 ANGSTROMS) OF 26-237 IN COMPLEX WITH SODIUM</scope>
    <scope>FUNCTION</scope>
    <scope>SUBCELLULAR LOCATION</scope>
    <scope>DISULFIDE BOND</scope>
    <scope>GLYCOSYLATION</scope>
    <scope>MUTAGENESIS OF THR-172 AND THR-228</scope>
    <scope>SODIUM-BINDING</scope>
    <scope>GLYCOSYLATION AT ASN-57 AND ASN-170</scope>
</reference>
<gene>
    <name evidence="14" type="primary">CHRNA9</name>
    <name type="synonym">NACHRA9</name>
</gene>